<dbReference type="EC" id="2.7.1.11" evidence="1"/>
<dbReference type="EMBL" id="CP000419">
    <property type="protein sequence ID" value="ABJ66355.1"/>
    <property type="molecule type" value="Genomic_DNA"/>
</dbReference>
<dbReference type="RefSeq" id="WP_011681243.1">
    <property type="nucleotide sequence ID" value="NC_008532.1"/>
</dbReference>
<dbReference type="SMR" id="Q03KB7"/>
<dbReference type="GeneID" id="66898990"/>
<dbReference type="KEGG" id="ste:STER_1164"/>
<dbReference type="HOGENOM" id="CLU_020655_0_1_9"/>
<dbReference type="UniPathway" id="UPA00109">
    <property type="reaction ID" value="UER00182"/>
</dbReference>
<dbReference type="GO" id="GO:0005945">
    <property type="term" value="C:6-phosphofructokinase complex"/>
    <property type="evidence" value="ECO:0007669"/>
    <property type="project" value="TreeGrafter"/>
</dbReference>
<dbReference type="GO" id="GO:0003872">
    <property type="term" value="F:6-phosphofructokinase activity"/>
    <property type="evidence" value="ECO:0007669"/>
    <property type="project" value="UniProtKB-UniRule"/>
</dbReference>
<dbReference type="GO" id="GO:0016208">
    <property type="term" value="F:AMP binding"/>
    <property type="evidence" value="ECO:0007669"/>
    <property type="project" value="TreeGrafter"/>
</dbReference>
<dbReference type="GO" id="GO:0005524">
    <property type="term" value="F:ATP binding"/>
    <property type="evidence" value="ECO:0007669"/>
    <property type="project" value="UniProtKB-KW"/>
</dbReference>
<dbReference type="GO" id="GO:0070095">
    <property type="term" value="F:fructose-6-phosphate binding"/>
    <property type="evidence" value="ECO:0007669"/>
    <property type="project" value="TreeGrafter"/>
</dbReference>
<dbReference type="GO" id="GO:0042802">
    <property type="term" value="F:identical protein binding"/>
    <property type="evidence" value="ECO:0007669"/>
    <property type="project" value="TreeGrafter"/>
</dbReference>
<dbReference type="GO" id="GO:0046872">
    <property type="term" value="F:metal ion binding"/>
    <property type="evidence" value="ECO:0007669"/>
    <property type="project" value="UniProtKB-KW"/>
</dbReference>
<dbReference type="GO" id="GO:0048029">
    <property type="term" value="F:monosaccharide binding"/>
    <property type="evidence" value="ECO:0007669"/>
    <property type="project" value="TreeGrafter"/>
</dbReference>
<dbReference type="GO" id="GO:0061621">
    <property type="term" value="P:canonical glycolysis"/>
    <property type="evidence" value="ECO:0007669"/>
    <property type="project" value="TreeGrafter"/>
</dbReference>
<dbReference type="GO" id="GO:0030388">
    <property type="term" value="P:fructose 1,6-bisphosphate metabolic process"/>
    <property type="evidence" value="ECO:0007669"/>
    <property type="project" value="TreeGrafter"/>
</dbReference>
<dbReference type="GO" id="GO:0006002">
    <property type="term" value="P:fructose 6-phosphate metabolic process"/>
    <property type="evidence" value="ECO:0007669"/>
    <property type="project" value="InterPro"/>
</dbReference>
<dbReference type="FunFam" id="3.40.50.450:FF:000001">
    <property type="entry name" value="ATP-dependent 6-phosphofructokinase"/>
    <property type="match status" value="1"/>
</dbReference>
<dbReference type="FunFam" id="3.40.50.460:FF:000002">
    <property type="entry name" value="ATP-dependent 6-phosphofructokinase"/>
    <property type="match status" value="1"/>
</dbReference>
<dbReference type="Gene3D" id="3.40.50.450">
    <property type="match status" value="1"/>
</dbReference>
<dbReference type="Gene3D" id="3.40.50.460">
    <property type="entry name" value="Phosphofructokinase domain"/>
    <property type="match status" value="1"/>
</dbReference>
<dbReference type="HAMAP" id="MF_00339">
    <property type="entry name" value="Phosphofructokinase_I_B1"/>
    <property type="match status" value="1"/>
</dbReference>
<dbReference type="InterPro" id="IPR022953">
    <property type="entry name" value="ATP_PFK"/>
</dbReference>
<dbReference type="InterPro" id="IPR012003">
    <property type="entry name" value="ATP_PFK_prok-type"/>
</dbReference>
<dbReference type="InterPro" id="IPR012828">
    <property type="entry name" value="PFKA_ATP_prok"/>
</dbReference>
<dbReference type="InterPro" id="IPR000023">
    <property type="entry name" value="Phosphofructokinase_dom"/>
</dbReference>
<dbReference type="InterPro" id="IPR035966">
    <property type="entry name" value="PKF_sf"/>
</dbReference>
<dbReference type="NCBIfam" id="TIGR02482">
    <property type="entry name" value="PFKA_ATP"/>
    <property type="match status" value="1"/>
</dbReference>
<dbReference type="NCBIfam" id="NF002872">
    <property type="entry name" value="PRK03202.1"/>
    <property type="match status" value="1"/>
</dbReference>
<dbReference type="PANTHER" id="PTHR13697:SF4">
    <property type="entry name" value="ATP-DEPENDENT 6-PHOSPHOFRUCTOKINASE"/>
    <property type="match status" value="1"/>
</dbReference>
<dbReference type="PANTHER" id="PTHR13697">
    <property type="entry name" value="PHOSPHOFRUCTOKINASE"/>
    <property type="match status" value="1"/>
</dbReference>
<dbReference type="Pfam" id="PF00365">
    <property type="entry name" value="PFK"/>
    <property type="match status" value="1"/>
</dbReference>
<dbReference type="PIRSF" id="PIRSF000532">
    <property type="entry name" value="ATP_PFK_prok"/>
    <property type="match status" value="1"/>
</dbReference>
<dbReference type="PRINTS" id="PR00476">
    <property type="entry name" value="PHFRCTKINASE"/>
</dbReference>
<dbReference type="SUPFAM" id="SSF53784">
    <property type="entry name" value="Phosphofructokinase"/>
    <property type="match status" value="1"/>
</dbReference>
<protein>
    <recommendedName>
        <fullName evidence="1">ATP-dependent 6-phosphofructokinase</fullName>
        <shortName evidence="1">ATP-PFK</shortName>
        <shortName evidence="1">Phosphofructokinase</shortName>
        <ecNumber evidence="1">2.7.1.11</ecNumber>
    </recommendedName>
    <alternativeName>
        <fullName evidence="1">Phosphohexokinase</fullName>
    </alternativeName>
</protein>
<reference key="1">
    <citation type="journal article" date="2006" name="Proc. Natl. Acad. Sci. U.S.A.">
        <title>Comparative genomics of the lactic acid bacteria.</title>
        <authorList>
            <person name="Makarova K.S."/>
            <person name="Slesarev A."/>
            <person name="Wolf Y.I."/>
            <person name="Sorokin A."/>
            <person name="Mirkin B."/>
            <person name="Koonin E.V."/>
            <person name="Pavlov A."/>
            <person name="Pavlova N."/>
            <person name="Karamychev V."/>
            <person name="Polouchine N."/>
            <person name="Shakhova V."/>
            <person name="Grigoriev I."/>
            <person name="Lou Y."/>
            <person name="Rohksar D."/>
            <person name="Lucas S."/>
            <person name="Huang K."/>
            <person name="Goodstein D.M."/>
            <person name="Hawkins T."/>
            <person name="Plengvidhya V."/>
            <person name="Welker D."/>
            <person name="Hughes J."/>
            <person name="Goh Y."/>
            <person name="Benson A."/>
            <person name="Baldwin K."/>
            <person name="Lee J.-H."/>
            <person name="Diaz-Muniz I."/>
            <person name="Dosti B."/>
            <person name="Smeianov V."/>
            <person name="Wechter W."/>
            <person name="Barabote R."/>
            <person name="Lorca G."/>
            <person name="Altermann E."/>
            <person name="Barrangou R."/>
            <person name="Ganesan B."/>
            <person name="Xie Y."/>
            <person name="Rawsthorne H."/>
            <person name="Tamir D."/>
            <person name="Parker C."/>
            <person name="Breidt F."/>
            <person name="Broadbent J.R."/>
            <person name="Hutkins R."/>
            <person name="O'Sullivan D."/>
            <person name="Steele J."/>
            <person name="Unlu G."/>
            <person name="Saier M.H. Jr."/>
            <person name="Klaenhammer T."/>
            <person name="Richardson P."/>
            <person name="Kozyavkin S."/>
            <person name="Weimer B.C."/>
            <person name="Mills D.A."/>
        </authorList>
    </citation>
    <scope>NUCLEOTIDE SEQUENCE [LARGE SCALE GENOMIC DNA]</scope>
    <source>
        <strain>ATCC BAA-491 / LMD-9</strain>
    </source>
</reference>
<sequence length="339" mass="35982">MKRIAVLTSGGDAPGMNAAVRAVVLKAISEGIEVFGINRGYAGMVEGDIFKLDAKRVENILSRGGTFLQSARYPEFAQLEGQLKGIEQLKKYGIEGVVVIGGDGSYHGAMRLTEHGFPAVGLPGTIDNDIVGTDYTIGFDTAVATATEALDKIQDTAFSHGRTFVVEVMGRNAGDIALWAGIASGADQIIVPEEEYDINEVVRKVKEGYESGEKSHHIIVLAEGVMGAEEFAAKMKEAGDTSDLRATNLGHVIRGGSPTARDRVLASWMGAHAVDLLKEGIGGVAVGIHNEQLVESPILGTAEEGALFSLTEDGKIIVNNPHKARLDFAELNRSLANLK</sequence>
<keyword id="KW-0021">Allosteric enzyme</keyword>
<keyword id="KW-0067">ATP-binding</keyword>
<keyword id="KW-0963">Cytoplasm</keyword>
<keyword id="KW-0324">Glycolysis</keyword>
<keyword id="KW-0418">Kinase</keyword>
<keyword id="KW-0460">Magnesium</keyword>
<keyword id="KW-0479">Metal-binding</keyword>
<keyword id="KW-0547">Nucleotide-binding</keyword>
<keyword id="KW-0808">Transferase</keyword>
<gene>
    <name evidence="1" type="primary">pfkA</name>
    <name type="ordered locus">STER_1164</name>
</gene>
<comment type="function">
    <text evidence="1">Catalyzes the phosphorylation of D-fructose 6-phosphate to fructose 1,6-bisphosphate by ATP, the first committing step of glycolysis.</text>
</comment>
<comment type="catalytic activity">
    <reaction evidence="1">
        <text>beta-D-fructose 6-phosphate + ATP = beta-D-fructose 1,6-bisphosphate + ADP + H(+)</text>
        <dbReference type="Rhea" id="RHEA:16109"/>
        <dbReference type="ChEBI" id="CHEBI:15378"/>
        <dbReference type="ChEBI" id="CHEBI:30616"/>
        <dbReference type="ChEBI" id="CHEBI:32966"/>
        <dbReference type="ChEBI" id="CHEBI:57634"/>
        <dbReference type="ChEBI" id="CHEBI:456216"/>
        <dbReference type="EC" id="2.7.1.11"/>
    </reaction>
</comment>
<comment type="cofactor">
    <cofactor evidence="1">
        <name>Mg(2+)</name>
        <dbReference type="ChEBI" id="CHEBI:18420"/>
    </cofactor>
</comment>
<comment type="activity regulation">
    <text evidence="1">Allosterically activated by ADP and other diphosphonucleosides, and allosterically inhibited by phosphoenolpyruvate.</text>
</comment>
<comment type="pathway">
    <text evidence="1">Carbohydrate degradation; glycolysis; D-glyceraldehyde 3-phosphate and glycerone phosphate from D-glucose: step 3/4.</text>
</comment>
<comment type="subunit">
    <text evidence="1">Homotetramer.</text>
</comment>
<comment type="subcellular location">
    <subcellularLocation>
        <location evidence="1">Cytoplasm</location>
    </subcellularLocation>
</comment>
<comment type="similarity">
    <text evidence="1">Belongs to the phosphofructokinase type A (PFKA) family. ATP-dependent PFK group I subfamily. Prokaryotic clade 'B1' sub-subfamily.</text>
</comment>
<proteinExistence type="inferred from homology"/>
<evidence type="ECO:0000255" key="1">
    <source>
        <dbReference type="HAMAP-Rule" id="MF_00339"/>
    </source>
</evidence>
<organism>
    <name type="scientific">Streptococcus thermophilus (strain ATCC BAA-491 / LMD-9)</name>
    <dbReference type="NCBI Taxonomy" id="322159"/>
    <lineage>
        <taxon>Bacteria</taxon>
        <taxon>Bacillati</taxon>
        <taxon>Bacillota</taxon>
        <taxon>Bacilli</taxon>
        <taxon>Lactobacillales</taxon>
        <taxon>Streptococcaceae</taxon>
        <taxon>Streptococcus</taxon>
    </lineage>
</organism>
<name>PFKA_STRTD</name>
<accession>Q03KB7</accession>
<feature type="chain" id="PRO_1000059803" description="ATP-dependent 6-phosphofructokinase">
    <location>
        <begin position="1"/>
        <end position="339"/>
    </location>
</feature>
<feature type="active site" description="Proton acceptor" evidence="1">
    <location>
        <position position="127"/>
    </location>
</feature>
<feature type="binding site" evidence="1">
    <location>
        <position position="11"/>
    </location>
    <ligand>
        <name>ATP</name>
        <dbReference type="ChEBI" id="CHEBI:30616"/>
    </ligand>
</feature>
<feature type="binding site" evidence="1">
    <location>
        <begin position="72"/>
        <end position="73"/>
    </location>
    <ligand>
        <name>ATP</name>
        <dbReference type="ChEBI" id="CHEBI:30616"/>
    </ligand>
</feature>
<feature type="binding site" evidence="1">
    <location>
        <begin position="102"/>
        <end position="105"/>
    </location>
    <ligand>
        <name>ATP</name>
        <dbReference type="ChEBI" id="CHEBI:30616"/>
    </ligand>
</feature>
<feature type="binding site" evidence="1">
    <location>
        <position position="103"/>
    </location>
    <ligand>
        <name>Mg(2+)</name>
        <dbReference type="ChEBI" id="CHEBI:18420"/>
        <note>catalytic</note>
    </ligand>
</feature>
<feature type="binding site" description="in other chain" evidence="1">
    <location>
        <begin position="125"/>
        <end position="127"/>
    </location>
    <ligand>
        <name>substrate</name>
        <note>ligand shared between dimeric partners</note>
    </ligand>
</feature>
<feature type="binding site" evidence="1">
    <location>
        <position position="162"/>
    </location>
    <ligand>
        <name>substrate</name>
        <note>ligand shared between dimeric partners</note>
    </ligand>
</feature>
<feature type="binding site" description="in other chain" evidence="1">
    <location>
        <begin position="169"/>
        <end position="171"/>
    </location>
    <ligand>
        <name>substrate</name>
        <note>ligand shared between dimeric partners</note>
    </ligand>
</feature>
<feature type="binding site" evidence="1">
    <location>
        <begin position="185"/>
        <end position="187"/>
    </location>
    <ligand>
        <name>ADP</name>
        <dbReference type="ChEBI" id="CHEBI:456216"/>
        <note>allosteric activator</note>
    </ligand>
</feature>
<feature type="binding site" evidence="1">
    <location>
        <begin position="214"/>
        <end position="216"/>
    </location>
    <ligand>
        <name>ADP</name>
        <dbReference type="ChEBI" id="CHEBI:456216"/>
        <note>allosteric activator</note>
    </ligand>
</feature>
<feature type="binding site" description="in other chain" evidence="1">
    <location>
        <position position="223"/>
    </location>
    <ligand>
        <name>substrate</name>
        <note>ligand shared between dimeric partners</note>
    </ligand>
</feature>
<feature type="binding site" evidence="1">
    <location>
        <position position="245"/>
    </location>
    <ligand>
        <name>substrate</name>
        <note>ligand shared between dimeric partners</note>
    </ligand>
</feature>
<feature type="binding site" description="in other chain" evidence="1">
    <location>
        <begin position="251"/>
        <end position="254"/>
    </location>
    <ligand>
        <name>substrate</name>
        <note>ligand shared between dimeric partners</note>
    </ligand>
</feature>